<keyword id="KW-0066">ATP synthesis</keyword>
<keyword id="KW-0067">ATP-binding</keyword>
<keyword id="KW-0997">Cell inner membrane</keyword>
<keyword id="KW-1003">Cell membrane</keyword>
<keyword id="KW-0139">CF(1)</keyword>
<keyword id="KW-0375">Hydrogen ion transport</keyword>
<keyword id="KW-0406">Ion transport</keyword>
<keyword id="KW-0472">Membrane</keyword>
<keyword id="KW-0547">Nucleotide-binding</keyword>
<keyword id="KW-1185">Reference proteome</keyword>
<keyword id="KW-1278">Translocase</keyword>
<keyword id="KW-0813">Transport</keyword>
<proteinExistence type="inferred from homology"/>
<sequence length="472" mass="51868">MSKKSIGKIVRIIGPVVDVKFSEGELPDIYDALVVNNPQTGKKLILEVEQLIGDNTVRTVAMDSTDGLIRGMEVENTGEPIKAPVGRGILGRMINVIGEPIDENGELKDVEYWPIHRPAPSMAEQKTEIEILETGLKVIDLLAPFPKGGKIGFFGGAGVGKTVLVMEMIRNIAIEHKGFSMFAGVGERTREGNDLYLEMQEAGVLNNTVLVFGQMNEPPGARFRVALTALTVAEYFRDVEGRDVLLFIDNIFRFVQAGSEVSALLGRMPSAVGYQPTLATDMGELQERITSTKRGSITSVQAIYVPADDITDPAPATTFTHLDATIVLSRQLAALGLYPAVDPLDSTSKILDPNIVGKEHYEVARGVQEVLQRYKDLQDIIAILGMEELSEEDKLIVQRARKIQRFLTQPTHVAERFTGMPGVYVPIKETIRGFKEILEGRYDDLPEAAFYMVGTIDEAVEKAKKLTQAVVI</sequence>
<protein>
    <recommendedName>
        <fullName evidence="1">ATP synthase subunit beta</fullName>
        <ecNumber evidence="1">7.1.2.2</ecNumber>
    </recommendedName>
    <alternativeName>
        <fullName evidence="1">ATP synthase F1 sector subunit beta</fullName>
    </alternativeName>
    <alternativeName>
        <fullName evidence="1">F-ATPase subunit beta</fullName>
    </alternativeName>
</protein>
<dbReference type="EC" id="7.1.2.2" evidence="1"/>
<dbReference type="EMBL" id="CP000771">
    <property type="protein sequence ID" value="ABS60190.1"/>
    <property type="molecule type" value="Genomic_DNA"/>
</dbReference>
<dbReference type="RefSeq" id="WP_011993511.1">
    <property type="nucleotide sequence ID" value="NC_009718.1"/>
</dbReference>
<dbReference type="SMR" id="A7HJV7"/>
<dbReference type="STRING" id="381764.Fnod_0325"/>
<dbReference type="KEGG" id="fno:Fnod_0325"/>
<dbReference type="eggNOG" id="COG0055">
    <property type="taxonomic scope" value="Bacteria"/>
</dbReference>
<dbReference type="HOGENOM" id="CLU_022398_0_2_0"/>
<dbReference type="OrthoDB" id="9801639at2"/>
<dbReference type="Proteomes" id="UP000002415">
    <property type="component" value="Chromosome"/>
</dbReference>
<dbReference type="GO" id="GO:0005886">
    <property type="term" value="C:plasma membrane"/>
    <property type="evidence" value="ECO:0007669"/>
    <property type="project" value="UniProtKB-SubCell"/>
</dbReference>
<dbReference type="GO" id="GO:0045259">
    <property type="term" value="C:proton-transporting ATP synthase complex"/>
    <property type="evidence" value="ECO:0007669"/>
    <property type="project" value="UniProtKB-KW"/>
</dbReference>
<dbReference type="GO" id="GO:0005524">
    <property type="term" value="F:ATP binding"/>
    <property type="evidence" value="ECO:0007669"/>
    <property type="project" value="UniProtKB-UniRule"/>
</dbReference>
<dbReference type="GO" id="GO:0016887">
    <property type="term" value="F:ATP hydrolysis activity"/>
    <property type="evidence" value="ECO:0007669"/>
    <property type="project" value="InterPro"/>
</dbReference>
<dbReference type="GO" id="GO:0046933">
    <property type="term" value="F:proton-transporting ATP synthase activity, rotational mechanism"/>
    <property type="evidence" value="ECO:0007669"/>
    <property type="project" value="UniProtKB-UniRule"/>
</dbReference>
<dbReference type="CDD" id="cd18110">
    <property type="entry name" value="ATP-synt_F1_beta_C"/>
    <property type="match status" value="1"/>
</dbReference>
<dbReference type="CDD" id="cd18115">
    <property type="entry name" value="ATP-synt_F1_beta_N"/>
    <property type="match status" value="1"/>
</dbReference>
<dbReference type="CDD" id="cd01133">
    <property type="entry name" value="F1-ATPase_beta_CD"/>
    <property type="match status" value="1"/>
</dbReference>
<dbReference type="FunFam" id="1.10.1140.10:FF:000001">
    <property type="entry name" value="ATP synthase subunit beta"/>
    <property type="match status" value="1"/>
</dbReference>
<dbReference type="FunFam" id="2.40.10.170:FF:000005">
    <property type="entry name" value="ATP synthase subunit beta"/>
    <property type="match status" value="1"/>
</dbReference>
<dbReference type="FunFam" id="3.40.50.300:FF:000026">
    <property type="entry name" value="ATP synthase subunit beta"/>
    <property type="match status" value="1"/>
</dbReference>
<dbReference type="Gene3D" id="2.40.10.170">
    <property type="match status" value="1"/>
</dbReference>
<dbReference type="Gene3D" id="1.10.1140.10">
    <property type="entry name" value="Bovine Mitochondrial F1-atpase, Atp Synthase Beta Chain, Chain D, domain 3"/>
    <property type="match status" value="1"/>
</dbReference>
<dbReference type="Gene3D" id="3.40.50.300">
    <property type="entry name" value="P-loop containing nucleotide triphosphate hydrolases"/>
    <property type="match status" value="1"/>
</dbReference>
<dbReference type="HAMAP" id="MF_01347">
    <property type="entry name" value="ATP_synth_beta_bact"/>
    <property type="match status" value="1"/>
</dbReference>
<dbReference type="InterPro" id="IPR003593">
    <property type="entry name" value="AAA+_ATPase"/>
</dbReference>
<dbReference type="InterPro" id="IPR055190">
    <property type="entry name" value="ATP-synt_VA_C"/>
</dbReference>
<dbReference type="InterPro" id="IPR005722">
    <property type="entry name" value="ATP_synth_F1_bsu"/>
</dbReference>
<dbReference type="InterPro" id="IPR020003">
    <property type="entry name" value="ATPase_a/bsu_AS"/>
</dbReference>
<dbReference type="InterPro" id="IPR050053">
    <property type="entry name" value="ATPase_alpha/beta_chains"/>
</dbReference>
<dbReference type="InterPro" id="IPR004100">
    <property type="entry name" value="ATPase_F1/V1/A1_a/bsu_N"/>
</dbReference>
<dbReference type="InterPro" id="IPR036121">
    <property type="entry name" value="ATPase_F1/V1/A1_a/bsu_N_sf"/>
</dbReference>
<dbReference type="InterPro" id="IPR000194">
    <property type="entry name" value="ATPase_F1/V1/A1_a/bsu_nucl-bd"/>
</dbReference>
<dbReference type="InterPro" id="IPR024034">
    <property type="entry name" value="ATPase_F1/V1_b/a_C"/>
</dbReference>
<dbReference type="InterPro" id="IPR027417">
    <property type="entry name" value="P-loop_NTPase"/>
</dbReference>
<dbReference type="NCBIfam" id="TIGR01039">
    <property type="entry name" value="atpD"/>
    <property type="match status" value="1"/>
</dbReference>
<dbReference type="PANTHER" id="PTHR15184">
    <property type="entry name" value="ATP SYNTHASE"/>
    <property type="match status" value="1"/>
</dbReference>
<dbReference type="PANTHER" id="PTHR15184:SF71">
    <property type="entry name" value="ATP SYNTHASE SUBUNIT BETA, MITOCHONDRIAL"/>
    <property type="match status" value="1"/>
</dbReference>
<dbReference type="Pfam" id="PF00006">
    <property type="entry name" value="ATP-synt_ab"/>
    <property type="match status" value="1"/>
</dbReference>
<dbReference type="Pfam" id="PF02874">
    <property type="entry name" value="ATP-synt_ab_N"/>
    <property type="match status" value="1"/>
</dbReference>
<dbReference type="Pfam" id="PF22919">
    <property type="entry name" value="ATP-synt_VA_C"/>
    <property type="match status" value="1"/>
</dbReference>
<dbReference type="SMART" id="SM00382">
    <property type="entry name" value="AAA"/>
    <property type="match status" value="1"/>
</dbReference>
<dbReference type="SUPFAM" id="SSF47917">
    <property type="entry name" value="C-terminal domain of alpha and beta subunits of F1 ATP synthase"/>
    <property type="match status" value="1"/>
</dbReference>
<dbReference type="SUPFAM" id="SSF50615">
    <property type="entry name" value="N-terminal domain of alpha and beta subunits of F1 ATP synthase"/>
    <property type="match status" value="1"/>
</dbReference>
<dbReference type="SUPFAM" id="SSF52540">
    <property type="entry name" value="P-loop containing nucleoside triphosphate hydrolases"/>
    <property type="match status" value="1"/>
</dbReference>
<dbReference type="PROSITE" id="PS00152">
    <property type="entry name" value="ATPASE_ALPHA_BETA"/>
    <property type="match status" value="1"/>
</dbReference>
<comment type="function">
    <text evidence="1">Produces ATP from ADP in the presence of a proton gradient across the membrane. The catalytic sites are hosted primarily by the beta subunits.</text>
</comment>
<comment type="catalytic activity">
    <reaction evidence="1">
        <text>ATP + H2O + 4 H(+)(in) = ADP + phosphate + 5 H(+)(out)</text>
        <dbReference type="Rhea" id="RHEA:57720"/>
        <dbReference type="ChEBI" id="CHEBI:15377"/>
        <dbReference type="ChEBI" id="CHEBI:15378"/>
        <dbReference type="ChEBI" id="CHEBI:30616"/>
        <dbReference type="ChEBI" id="CHEBI:43474"/>
        <dbReference type="ChEBI" id="CHEBI:456216"/>
        <dbReference type="EC" id="7.1.2.2"/>
    </reaction>
</comment>
<comment type="subunit">
    <text evidence="1">F-type ATPases have 2 components, CF(1) - the catalytic core - and CF(0) - the membrane proton channel. CF(1) has five subunits: alpha(3), beta(3), gamma(1), delta(1), epsilon(1). CF(0) has three main subunits: a(1), b(2) and c(9-12). The alpha and beta chains form an alternating ring which encloses part of the gamma chain. CF(1) is attached to CF(0) by a central stalk formed by the gamma and epsilon chains, while a peripheral stalk is formed by the delta and b chains.</text>
</comment>
<comment type="subcellular location">
    <subcellularLocation>
        <location evidence="1">Cell inner membrane</location>
        <topology evidence="1">Peripheral membrane protein</topology>
    </subcellularLocation>
</comment>
<comment type="similarity">
    <text evidence="1">Belongs to the ATPase alpha/beta chains family.</text>
</comment>
<evidence type="ECO:0000255" key="1">
    <source>
        <dbReference type="HAMAP-Rule" id="MF_01347"/>
    </source>
</evidence>
<name>ATPB_FERNB</name>
<gene>
    <name evidence="1" type="primary">atpD</name>
    <name type="ordered locus">Fnod_0325</name>
</gene>
<feature type="chain" id="PRO_1000073366" description="ATP synthase subunit beta">
    <location>
        <begin position="1"/>
        <end position="472"/>
    </location>
</feature>
<feature type="binding site" evidence="1">
    <location>
        <begin position="155"/>
        <end position="162"/>
    </location>
    <ligand>
        <name>ATP</name>
        <dbReference type="ChEBI" id="CHEBI:30616"/>
    </ligand>
</feature>
<reference key="1">
    <citation type="submission" date="2007-07" db="EMBL/GenBank/DDBJ databases">
        <title>Complete sequence of Fervidobacterium nodosum Rt17-B1.</title>
        <authorList>
            <consortium name="US DOE Joint Genome Institute"/>
            <person name="Copeland A."/>
            <person name="Lucas S."/>
            <person name="Lapidus A."/>
            <person name="Barry K."/>
            <person name="Glavina del Rio T."/>
            <person name="Dalin E."/>
            <person name="Tice H."/>
            <person name="Pitluck S."/>
            <person name="Saunders E."/>
            <person name="Brettin T."/>
            <person name="Bruce D."/>
            <person name="Detter J.C."/>
            <person name="Han C."/>
            <person name="Schmutz J."/>
            <person name="Larimer F."/>
            <person name="Land M."/>
            <person name="Hauser L."/>
            <person name="Kyrpides N."/>
            <person name="Mikhailova N."/>
            <person name="Nelson K."/>
            <person name="Gogarten J.P."/>
            <person name="Noll K."/>
            <person name="Richardson P."/>
        </authorList>
    </citation>
    <scope>NUCLEOTIDE SEQUENCE [LARGE SCALE GENOMIC DNA]</scope>
    <source>
        <strain>ATCC 35602 / DSM 5306 / Rt17-B1</strain>
    </source>
</reference>
<accession>A7HJV7</accession>
<organism>
    <name type="scientific">Fervidobacterium nodosum (strain ATCC 35602 / DSM 5306 / Rt17-B1)</name>
    <dbReference type="NCBI Taxonomy" id="381764"/>
    <lineage>
        <taxon>Bacteria</taxon>
        <taxon>Thermotogati</taxon>
        <taxon>Thermotogota</taxon>
        <taxon>Thermotogae</taxon>
        <taxon>Thermotogales</taxon>
        <taxon>Fervidobacteriaceae</taxon>
        <taxon>Fervidobacterium</taxon>
    </lineage>
</organism>